<protein>
    <recommendedName>
        <fullName evidence="1">Ribosomal RNA small subunit methyltransferase H</fullName>
        <ecNumber evidence="1">2.1.1.199</ecNumber>
    </recommendedName>
    <alternativeName>
        <fullName evidence="1">16S rRNA m(4)C1402 methyltransferase</fullName>
    </alternativeName>
    <alternativeName>
        <fullName evidence="1">rRNA (cytosine-N(4)-)-methyltransferase RsmH</fullName>
    </alternativeName>
</protein>
<evidence type="ECO:0000255" key="1">
    <source>
        <dbReference type="HAMAP-Rule" id="MF_01007"/>
    </source>
</evidence>
<reference key="1">
    <citation type="journal article" date="2011" name="Stand. Genomic Sci.">
        <title>Complete genome sequence of the filamentous gliding predatory bacterium Herpetosiphon aurantiacus type strain (114-95(T)).</title>
        <authorList>
            <person name="Kiss H."/>
            <person name="Nett M."/>
            <person name="Domin N."/>
            <person name="Martin K."/>
            <person name="Maresca J.A."/>
            <person name="Copeland A."/>
            <person name="Lapidus A."/>
            <person name="Lucas S."/>
            <person name="Berry K.W."/>
            <person name="Glavina Del Rio T."/>
            <person name="Dalin E."/>
            <person name="Tice H."/>
            <person name="Pitluck S."/>
            <person name="Richardson P."/>
            <person name="Bruce D."/>
            <person name="Goodwin L."/>
            <person name="Han C."/>
            <person name="Detter J.C."/>
            <person name="Schmutz J."/>
            <person name="Brettin T."/>
            <person name="Land M."/>
            <person name="Hauser L."/>
            <person name="Kyrpides N.C."/>
            <person name="Ivanova N."/>
            <person name="Goeker M."/>
            <person name="Woyke T."/>
            <person name="Klenk H.P."/>
            <person name="Bryant D.A."/>
        </authorList>
    </citation>
    <scope>NUCLEOTIDE SEQUENCE [LARGE SCALE GENOMIC DNA]</scope>
    <source>
        <strain>ATCC 23779 / DSM 785 / 114-95</strain>
    </source>
</reference>
<gene>
    <name evidence="1" type="primary">rsmH</name>
    <name type="synonym">mraW</name>
    <name type="ordered locus">Haur_3519</name>
</gene>
<accession>A9B518</accession>
<feature type="chain" id="PRO_0000386929" description="Ribosomal RNA small subunit methyltransferase H">
    <location>
        <begin position="1"/>
        <end position="337"/>
    </location>
</feature>
<feature type="binding site" evidence="1">
    <location>
        <begin position="33"/>
        <end position="35"/>
    </location>
    <ligand>
        <name>S-adenosyl-L-methionine</name>
        <dbReference type="ChEBI" id="CHEBI:59789"/>
    </ligand>
</feature>
<feature type="binding site" evidence="1">
    <location>
        <position position="53"/>
    </location>
    <ligand>
        <name>S-adenosyl-L-methionine</name>
        <dbReference type="ChEBI" id="CHEBI:59789"/>
    </ligand>
</feature>
<feature type="binding site" evidence="1">
    <location>
        <position position="101"/>
    </location>
    <ligand>
        <name>S-adenosyl-L-methionine</name>
        <dbReference type="ChEBI" id="CHEBI:59789"/>
    </ligand>
</feature>
<feature type="binding site" evidence="1">
    <location>
        <position position="108"/>
    </location>
    <ligand>
        <name>S-adenosyl-L-methionine</name>
        <dbReference type="ChEBI" id="CHEBI:59789"/>
    </ligand>
</feature>
<organism>
    <name type="scientific">Herpetosiphon aurantiacus (strain ATCC 23779 / DSM 785 / 114-95)</name>
    <dbReference type="NCBI Taxonomy" id="316274"/>
    <lineage>
        <taxon>Bacteria</taxon>
        <taxon>Bacillati</taxon>
        <taxon>Chloroflexota</taxon>
        <taxon>Chloroflexia</taxon>
        <taxon>Herpetosiphonales</taxon>
        <taxon>Herpetosiphonaceae</taxon>
        <taxon>Herpetosiphon</taxon>
    </lineage>
</organism>
<dbReference type="EC" id="2.1.1.199" evidence="1"/>
<dbReference type="EMBL" id="CP000875">
    <property type="protein sequence ID" value="ABX06155.1"/>
    <property type="molecule type" value="Genomic_DNA"/>
</dbReference>
<dbReference type="SMR" id="A9B518"/>
<dbReference type="FunCoup" id="A9B518">
    <property type="interactions" value="444"/>
</dbReference>
<dbReference type="STRING" id="316274.Haur_3519"/>
<dbReference type="KEGG" id="hau:Haur_3519"/>
<dbReference type="eggNOG" id="COG0275">
    <property type="taxonomic scope" value="Bacteria"/>
</dbReference>
<dbReference type="HOGENOM" id="CLU_038422_1_1_0"/>
<dbReference type="InParanoid" id="A9B518"/>
<dbReference type="Proteomes" id="UP000000787">
    <property type="component" value="Chromosome"/>
</dbReference>
<dbReference type="GO" id="GO:0005737">
    <property type="term" value="C:cytoplasm"/>
    <property type="evidence" value="ECO:0007669"/>
    <property type="project" value="UniProtKB-SubCell"/>
</dbReference>
<dbReference type="GO" id="GO:0071424">
    <property type="term" value="F:rRNA (cytosine-N4-)-methyltransferase activity"/>
    <property type="evidence" value="ECO:0007669"/>
    <property type="project" value="UniProtKB-UniRule"/>
</dbReference>
<dbReference type="GO" id="GO:0070475">
    <property type="term" value="P:rRNA base methylation"/>
    <property type="evidence" value="ECO:0007669"/>
    <property type="project" value="UniProtKB-UniRule"/>
</dbReference>
<dbReference type="FunFam" id="1.10.150.170:FF:000003">
    <property type="entry name" value="Ribosomal RNA small subunit methyltransferase H"/>
    <property type="match status" value="1"/>
</dbReference>
<dbReference type="Gene3D" id="1.10.150.170">
    <property type="entry name" value="Putative methyltransferase TM0872, insert domain"/>
    <property type="match status" value="1"/>
</dbReference>
<dbReference type="Gene3D" id="3.40.50.150">
    <property type="entry name" value="Vaccinia Virus protein VP39"/>
    <property type="match status" value="1"/>
</dbReference>
<dbReference type="HAMAP" id="MF_01007">
    <property type="entry name" value="16SrRNA_methyltr_H"/>
    <property type="match status" value="1"/>
</dbReference>
<dbReference type="InterPro" id="IPR002903">
    <property type="entry name" value="RsmH"/>
</dbReference>
<dbReference type="InterPro" id="IPR023397">
    <property type="entry name" value="SAM-dep_MeTrfase_MraW_recog"/>
</dbReference>
<dbReference type="InterPro" id="IPR029063">
    <property type="entry name" value="SAM-dependent_MTases_sf"/>
</dbReference>
<dbReference type="NCBIfam" id="TIGR00006">
    <property type="entry name" value="16S rRNA (cytosine(1402)-N(4))-methyltransferase RsmH"/>
    <property type="match status" value="1"/>
</dbReference>
<dbReference type="PANTHER" id="PTHR11265:SF0">
    <property type="entry name" value="12S RRNA N4-METHYLCYTIDINE METHYLTRANSFERASE"/>
    <property type="match status" value="1"/>
</dbReference>
<dbReference type="PANTHER" id="PTHR11265">
    <property type="entry name" value="S-ADENOSYL-METHYLTRANSFERASE MRAW"/>
    <property type="match status" value="1"/>
</dbReference>
<dbReference type="Pfam" id="PF01795">
    <property type="entry name" value="Methyltransf_5"/>
    <property type="match status" value="1"/>
</dbReference>
<dbReference type="PIRSF" id="PIRSF004486">
    <property type="entry name" value="MraW"/>
    <property type="match status" value="1"/>
</dbReference>
<dbReference type="SUPFAM" id="SSF81799">
    <property type="entry name" value="Putative methyltransferase TM0872, insert domain"/>
    <property type="match status" value="1"/>
</dbReference>
<dbReference type="SUPFAM" id="SSF53335">
    <property type="entry name" value="S-adenosyl-L-methionine-dependent methyltransferases"/>
    <property type="match status" value="1"/>
</dbReference>
<sequence length="337" mass="36593">MVSMHIPVLYDAALAALNLRPDGRYIDGTLGWAGHSSGILEGSGPTGRLLAIDQDPMALAAARERLAPYGERATIVHGNYRQMASLAAQHGWQQVDGILLDIGVSSPQLDLPERGFSFQYDAPLDMRMNPTRGESAADLIAQLDETSLANLIYEYGEERLSRRIARRIVEQRSKSPITSTAQLASLVKSAVGGQAGKTHPATRTFQALRIAVNDELGALREGLAAATNLLAPGGRLAVITFHSLEDRIVKEWMRDQASECLIPAKLEILACPHNCAANTGPRSCIYPVGRDCDYVPTLEVLSRKPIEATPEELKANPRARSAKLRVAERRLTKTLAS</sequence>
<name>RSMH_HERA2</name>
<keyword id="KW-0963">Cytoplasm</keyword>
<keyword id="KW-0489">Methyltransferase</keyword>
<keyword id="KW-0698">rRNA processing</keyword>
<keyword id="KW-0949">S-adenosyl-L-methionine</keyword>
<keyword id="KW-0808">Transferase</keyword>
<proteinExistence type="inferred from homology"/>
<comment type="function">
    <text evidence="1">Specifically methylates the N4 position of cytidine in position 1402 (C1402) of 16S rRNA.</text>
</comment>
<comment type="catalytic activity">
    <reaction evidence="1">
        <text>cytidine(1402) in 16S rRNA + S-adenosyl-L-methionine = N(4)-methylcytidine(1402) in 16S rRNA + S-adenosyl-L-homocysteine + H(+)</text>
        <dbReference type="Rhea" id="RHEA:42928"/>
        <dbReference type="Rhea" id="RHEA-COMP:10286"/>
        <dbReference type="Rhea" id="RHEA-COMP:10287"/>
        <dbReference type="ChEBI" id="CHEBI:15378"/>
        <dbReference type="ChEBI" id="CHEBI:57856"/>
        <dbReference type="ChEBI" id="CHEBI:59789"/>
        <dbReference type="ChEBI" id="CHEBI:74506"/>
        <dbReference type="ChEBI" id="CHEBI:82748"/>
        <dbReference type="EC" id="2.1.1.199"/>
    </reaction>
</comment>
<comment type="subcellular location">
    <subcellularLocation>
        <location evidence="1">Cytoplasm</location>
    </subcellularLocation>
</comment>
<comment type="similarity">
    <text evidence="1">Belongs to the methyltransferase superfamily. RsmH family.</text>
</comment>